<feature type="chain" id="PRO_1000008395" description="Holo-[acyl-carrier-protein] synthase">
    <location>
        <begin position="1"/>
        <end position="148"/>
    </location>
</feature>
<feature type="binding site" evidence="1">
    <location>
        <position position="9"/>
    </location>
    <ligand>
        <name>Mg(2+)</name>
        <dbReference type="ChEBI" id="CHEBI:18420"/>
    </ligand>
</feature>
<feature type="binding site" evidence="1">
    <location>
        <position position="63"/>
    </location>
    <ligand>
        <name>Mg(2+)</name>
        <dbReference type="ChEBI" id="CHEBI:18420"/>
    </ligand>
</feature>
<accession>A0K5W3</accession>
<comment type="function">
    <text evidence="1">Transfers the 4'-phosphopantetheine moiety from coenzyme A to a Ser of acyl-carrier-protein.</text>
</comment>
<comment type="catalytic activity">
    <reaction evidence="1">
        <text>apo-[ACP] + CoA = holo-[ACP] + adenosine 3',5'-bisphosphate + H(+)</text>
        <dbReference type="Rhea" id="RHEA:12068"/>
        <dbReference type="Rhea" id="RHEA-COMP:9685"/>
        <dbReference type="Rhea" id="RHEA-COMP:9690"/>
        <dbReference type="ChEBI" id="CHEBI:15378"/>
        <dbReference type="ChEBI" id="CHEBI:29999"/>
        <dbReference type="ChEBI" id="CHEBI:57287"/>
        <dbReference type="ChEBI" id="CHEBI:58343"/>
        <dbReference type="ChEBI" id="CHEBI:64479"/>
        <dbReference type="EC" id="2.7.8.7"/>
    </reaction>
</comment>
<comment type="cofactor">
    <cofactor evidence="1">
        <name>Mg(2+)</name>
        <dbReference type="ChEBI" id="CHEBI:18420"/>
    </cofactor>
</comment>
<comment type="subcellular location">
    <subcellularLocation>
        <location evidence="1">Cytoplasm</location>
    </subcellularLocation>
</comment>
<comment type="similarity">
    <text evidence="1">Belongs to the P-Pant transferase superfamily. AcpS family.</text>
</comment>
<proteinExistence type="inferred from homology"/>
<reference key="1">
    <citation type="submission" date="2006-08" db="EMBL/GenBank/DDBJ databases">
        <title>Complete sequence of chromosome 1 of Burkholderia cenocepacia HI2424.</title>
        <authorList>
            <person name="Copeland A."/>
            <person name="Lucas S."/>
            <person name="Lapidus A."/>
            <person name="Barry K."/>
            <person name="Detter J.C."/>
            <person name="Glavina del Rio T."/>
            <person name="Hammon N."/>
            <person name="Israni S."/>
            <person name="Pitluck S."/>
            <person name="Chain P."/>
            <person name="Malfatti S."/>
            <person name="Shin M."/>
            <person name="Vergez L."/>
            <person name="Schmutz J."/>
            <person name="Larimer F."/>
            <person name="Land M."/>
            <person name="Hauser L."/>
            <person name="Kyrpides N."/>
            <person name="Kim E."/>
            <person name="LiPuma J.J."/>
            <person name="Gonzalez C.F."/>
            <person name="Konstantinidis K."/>
            <person name="Tiedje J.M."/>
            <person name="Richardson P."/>
        </authorList>
    </citation>
    <scope>NUCLEOTIDE SEQUENCE [LARGE SCALE GENOMIC DNA]</scope>
    <source>
        <strain>HI2424</strain>
    </source>
</reference>
<keyword id="KW-0963">Cytoplasm</keyword>
<keyword id="KW-0275">Fatty acid biosynthesis</keyword>
<keyword id="KW-0276">Fatty acid metabolism</keyword>
<keyword id="KW-0444">Lipid biosynthesis</keyword>
<keyword id="KW-0443">Lipid metabolism</keyword>
<keyword id="KW-0460">Magnesium</keyword>
<keyword id="KW-0479">Metal-binding</keyword>
<keyword id="KW-0808">Transferase</keyword>
<gene>
    <name evidence="1" type="primary">acpS</name>
    <name type="ordered locus">Bcen2424_1138</name>
</gene>
<sequence>MAIYGIGTDIAQVSRVAAVLERTGGRFAEKVLGPDELRVFHARRARSEARGIAFLATRFSAKEAFSKAIGLGMHWPMTWRALQTLNHPSGEPYVVASGELADWLAARGITARVTVSDERDYAVSFVVAETDAETDAAPAPVPVSRTSS</sequence>
<protein>
    <recommendedName>
        <fullName evidence="1">Holo-[acyl-carrier-protein] synthase</fullName>
        <shortName evidence="1">Holo-ACP synthase</shortName>
        <ecNumber evidence="1">2.7.8.7</ecNumber>
    </recommendedName>
    <alternativeName>
        <fullName evidence="1">4'-phosphopantetheinyl transferase AcpS</fullName>
    </alternativeName>
</protein>
<name>ACPS_BURCH</name>
<dbReference type="EC" id="2.7.8.7" evidence="1"/>
<dbReference type="EMBL" id="CP000458">
    <property type="protein sequence ID" value="ABK07890.1"/>
    <property type="molecule type" value="Genomic_DNA"/>
</dbReference>
<dbReference type="RefSeq" id="WP_011544946.1">
    <property type="nucleotide sequence ID" value="NC_008542.1"/>
</dbReference>
<dbReference type="SMR" id="A0K5W3"/>
<dbReference type="KEGG" id="bch:Bcen2424_1138"/>
<dbReference type="HOGENOM" id="CLU_089696_3_1_4"/>
<dbReference type="GO" id="GO:0005737">
    <property type="term" value="C:cytoplasm"/>
    <property type="evidence" value="ECO:0007669"/>
    <property type="project" value="UniProtKB-SubCell"/>
</dbReference>
<dbReference type="GO" id="GO:0008897">
    <property type="term" value="F:holo-[acyl-carrier-protein] synthase activity"/>
    <property type="evidence" value="ECO:0007669"/>
    <property type="project" value="UniProtKB-UniRule"/>
</dbReference>
<dbReference type="GO" id="GO:0000287">
    <property type="term" value="F:magnesium ion binding"/>
    <property type="evidence" value="ECO:0007669"/>
    <property type="project" value="UniProtKB-UniRule"/>
</dbReference>
<dbReference type="GO" id="GO:0006633">
    <property type="term" value="P:fatty acid biosynthetic process"/>
    <property type="evidence" value="ECO:0007669"/>
    <property type="project" value="UniProtKB-UniRule"/>
</dbReference>
<dbReference type="Gene3D" id="3.90.470.20">
    <property type="entry name" value="4'-phosphopantetheinyl transferase domain"/>
    <property type="match status" value="1"/>
</dbReference>
<dbReference type="HAMAP" id="MF_00101">
    <property type="entry name" value="AcpS"/>
    <property type="match status" value="1"/>
</dbReference>
<dbReference type="InterPro" id="IPR008278">
    <property type="entry name" value="4-PPantetheinyl_Trfase_dom"/>
</dbReference>
<dbReference type="InterPro" id="IPR037143">
    <property type="entry name" value="4-PPantetheinyl_Trfase_dom_sf"/>
</dbReference>
<dbReference type="InterPro" id="IPR002582">
    <property type="entry name" value="ACPS"/>
</dbReference>
<dbReference type="InterPro" id="IPR004568">
    <property type="entry name" value="Ppantetheine-prot_Trfase_dom"/>
</dbReference>
<dbReference type="NCBIfam" id="TIGR00516">
    <property type="entry name" value="acpS"/>
    <property type="match status" value="1"/>
</dbReference>
<dbReference type="NCBIfam" id="TIGR00556">
    <property type="entry name" value="pantethn_trn"/>
    <property type="match status" value="1"/>
</dbReference>
<dbReference type="Pfam" id="PF01648">
    <property type="entry name" value="ACPS"/>
    <property type="match status" value="1"/>
</dbReference>
<dbReference type="SUPFAM" id="SSF56214">
    <property type="entry name" value="4'-phosphopantetheinyl transferase"/>
    <property type="match status" value="1"/>
</dbReference>
<organism>
    <name type="scientific">Burkholderia cenocepacia (strain HI2424)</name>
    <dbReference type="NCBI Taxonomy" id="331272"/>
    <lineage>
        <taxon>Bacteria</taxon>
        <taxon>Pseudomonadati</taxon>
        <taxon>Pseudomonadota</taxon>
        <taxon>Betaproteobacteria</taxon>
        <taxon>Burkholderiales</taxon>
        <taxon>Burkholderiaceae</taxon>
        <taxon>Burkholderia</taxon>
        <taxon>Burkholderia cepacia complex</taxon>
    </lineage>
</organism>
<evidence type="ECO:0000255" key="1">
    <source>
        <dbReference type="HAMAP-Rule" id="MF_00101"/>
    </source>
</evidence>